<sequence length="426" mass="46575">MDLTGGFGARSGGVGPCREPIGLESLHLGDEFRQLVTTLPPENPGGSFTALLELPPTQAVELLHFTDSSSSQQAAVTGIGGEIPPPLHSFGGTLAFPSNSVLMERAARFSVIATEQQNGNISGETPTSSVPSNSSANLDRVKTEPAETDSSQRLISDSAIENQIPCPNQNNRNGKRKDFEKKGKSSTKKNKSSEENEKLPYVHVRARRGQATDSHSLAERARREKINARMKLLQELVPGCDKGTDFGGKIKIKVCFGVHLLMISGKKVAIFLWKVSCEDLIDCSFSPPRIQGTALVLDEIINHVQSLQRQVEMLSMRLAAVNPRIDFNLDTILASENGSLMDGSFNAAPMQLAWPQQAIETEQSFHHRQLQQPPTQQWPFDGLNQPVWGREEDQAHGNDNSNLMAVSENVMVASANLHPNQVKMEL</sequence>
<comment type="subunit">
    <text evidence="6">Homodimer.</text>
</comment>
<comment type="interaction">
    <interactant intactId="EBI-15194889">
        <id>Q3EAI1-2</id>
    </interactant>
    <interactant intactId="EBI-15191993">
        <id>Q9LV17</id>
        <label>BHLH79</label>
    </interactant>
    <organismsDiffer>false</organismsDiffer>
    <experiments>3</experiments>
</comment>
<comment type="interaction">
    <interactant intactId="EBI-15194889">
        <id>Q3EAI1-2</id>
    </interactant>
    <interactant intactId="EBI-15192969">
        <id>Q9M0B9</id>
        <label>IBL1</label>
    </interactant>
    <organismsDiffer>false</organismsDiffer>
    <experiments>3</experiments>
</comment>
<comment type="interaction">
    <interactant intactId="EBI-15194889">
        <id>Q3EAI1-2</id>
    </interactant>
    <interactant intactId="EBI-15194891">
        <id>Q9FML4</id>
        <label>LOB</label>
    </interactant>
    <organismsDiffer>false</organismsDiffer>
    <experiments>3</experiments>
</comment>
<comment type="subcellular location">
    <subcellularLocation>
        <location evidence="1">Nucleus</location>
    </subcellularLocation>
</comment>
<comment type="alternative products">
    <event type="alternative splicing"/>
    <isoform>
        <id>Q3EAI1-1</id>
        <name>1</name>
        <sequence type="displayed"/>
    </isoform>
    <isoform>
        <id>Q3EAI1-2</id>
        <name>2</name>
        <sequence type="described" ref="VSP_036088"/>
    </isoform>
</comment>
<comment type="tissue specificity">
    <text evidence="3">Expressed constitutively in roots, leaves, stems, and flowers.</text>
</comment>
<organism>
    <name type="scientific">Arabidopsis thaliana</name>
    <name type="common">Mouse-ear cress</name>
    <dbReference type="NCBI Taxonomy" id="3702"/>
    <lineage>
        <taxon>Eukaryota</taxon>
        <taxon>Viridiplantae</taxon>
        <taxon>Streptophyta</taxon>
        <taxon>Embryophyta</taxon>
        <taxon>Tracheophyta</taxon>
        <taxon>Spermatophyta</taxon>
        <taxon>Magnoliopsida</taxon>
        <taxon>eudicotyledons</taxon>
        <taxon>Gunneridae</taxon>
        <taxon>Pentapetalae</taxon>
        <taxon>rosids</taxon>
        <taxon>malvids</taxon>
        <taxon>Brassicales</taxon>
        <taxon>Brassicaceae</taxon>
        <taxon>Camelineae</taxon>
        <taxon>Arabidopsis</taxon>
    </lineage>
</organism>
<proteinExistence type="evidence at protein level"/>
<reference key="1">
    <citation type="journal article" date="2003" name="Mol. Biol. Evol.">
        <title>The basic helix-loop-helix transcription factor family in plants: a genome-wide study of protein structure and functional diversity.</title>
        <authorList>
            <person name="Heim M.A."/>
            <person name="Jakoby M."/>
            <person name="Werber M."/>
            <person name="Martin C."/>
            <person name="Weisshaar B."/>
            <person name="Bailey P.C."/>
        </authorList>
    </citation>
    <scope>NUCLEOTIDE SEQUENCE [MRNA] (ISOFORM 2)</scope>
    <scope>TISSUE SPECIFICITY</scope>
    <scope>GENE FAMILY</scope>
    <scope>NOMENCLATURE</scope>
    <source>
        <strain>cv. Columbia</strain>
        <tissue>Flower</tissue>
    </source>
</reference>
<reference key="2">
    <citation type="journal article" date="2000" name="Nature">
        <title>Sequence and analysis of chromosome 3 of the plant Arabidopsis thaliana.</title>
        <authorList>
            <person name="Salanoubat M."/>
            <person name="Lemcke K."/>
            <person name="Rieger M."/>
            <person name="Ansorge W."/>
            <person name="Unseld M."/>
            <person name="Fartmann B."/>
            <person name="Valle G."/>
            <person name="Bloecker H."/>
            <person name="Perez-Alonso M."/>
            <person name="Obermaier B."/>
            <person name="Delseny M."/>
            <person name="Boutry M."/>
            <person name="Grivell L.A."/>
            <person name="Mache R."/>
            <person name="Puigdomenech P."/>
            <person name="De Simone V."/>
            <person name="Choisne N."/>
            <person name="Artiguenave F."/>
            <person name="Robert C."/>
            <person name="Brottier P."/>
            <person name="Wincker P."/>
            <person name="Cattolico L."/>
            <person name="Weissenbach J."/>
            <person name="Saurin W."/>
            <person name="Quetier F."/>
            <person name="Schaefer M."/>
            <person name="Mueller-Auer S."/>
            <person name="Gabel C."/>
            <person name="Fuchs M."/>
            <person name="Benes V."/>
            <person name="Wurmbach E."/>
            <person name="Drzonek H."/>
            <person name="Erfle H."/>
            <person name="Jordan N."/>
            <person name="Bangert S."/>
            <person name="Wiedelmann R."/>
            <person name="Kranz H."/>
            <person name="Voss H."/>
            <person name="Holland R."/>
            <person name="Brandt P."/>
            <person name="Nyakatura G."/>
            <person name="Vezzi A."/>
            <person name="D'Angelo M."/>
            <person name="Pallavicini A."/>
            <person name="Toppo S."/>
            <person name="Simionati B."/>
            <person name="Conrad A."/>
            <person name="Hornischer K."/>
            <person name="Kauer G."/>
            <person name="Loehnert T.-H."/>
            <person name="Nordsiek G."/>
            <person name="Reichelt J."/>
            <person name="Scharfe M."/>
            <person name="Schoen O."/>
            <person name="Bargues M."/>
            <person name="Terol J."/>
            <person name="Climent J."/>
            <person name="Navarro P."/>
            <person name="Collado C."/>
            <person name="Perez-Perez A."/>
            <person name="Ottenwaelder B."/>
            <person name="Duchemin D."/>
            <person name="Cooke R."/>
            <person name="Laudie M."/>
            <person name="Berger-Llauro C."/>
            <person name="Purnelle B."/>
            <person name="Masuy D."/>
            <person name="de Haan M."/>
            <person name="Maarse A.C."/>
            <person name="Alcaraz J.-P."/>
            <person name="Cottet A."/>
            <person name="Casacuberta E."/>
            <person name="Monfort A."/>
            <person name="Argiriou A."/>
            <person name="Flores M."/>
            <person name="Liguori R."/>
            <person name="Vitale D."/>
            <person name="Mannhaupt G."/>
            <person name="Haase D."/>
            <person name="Schoof H."/>
            <person name="Rudd S."/>
            <person name="Zaccaria P."/>
            <person name="Mewes H.-W."/>
            <person name="Mayer K.F.X."/>
            <person name="Kaul S."/>
            <person name="Town C.D."/>
            <person name="Koo H.L."/>
            <person name="Tallon L.J."/>
            <person name="Jenkins J."/>
            <person name="Rooney T."/>
            <person name="Rizzo M."/>
            <person name="Walts A."/>
            <person name="Utterback T."/>
            <person name="Fujii C.Y."/>
            <person name="Shea T.P."/>
            <person name="Creasy T.H."/>
            <person name="Haas B."/>
            <person name="Maiti R."/>
            <person name="Wu D."/>
            <person name="Peterson J."/>
            <person name="Van Aken S."/>
            <person name="Pai G."/>
            <person name="Militscher J."/>
            <person name="Sellers P."/>
            <person name="Gill J.E."/>
            <person name="Feldblyum T.V."/>
            <person name="Preuss D."/>
            <person name="Lin X."/>
            <person name="Nierman W.C."/>
            <person name="Salzberg S.L."/>
            <person name="White O."/>
            <person name="Venter J.C."/>
            <person name="Fraser C.M."/>
            <person name="Kaneko T."/>
            <person name="Nakamura Y."/>
            <person name="Sato S."/>
            <person name="Kato T."/>
            <person name="Asamizu E."/>
            <person name="Sasamoto S."/>
            <person name="Kimura T."/>
            <person name="Idesawa K."/>
            <person name="Kawashima K."/>
            <person name="Kishida Y."/>
            <person name="Kiyokawa C."/>
            <person name="Kohara M."/>
            <person name="Matsumoto M."/>
            <person name="Matsuno A."/>
            <person name="Muraki A."/>
            <person name="Nakayama S."/>
            <person name="Nakazaki N."/>
            <person name="Shinpo S."/>
            <person name="Takeuchi C."/>
            <person name="Wada T."/>
            <person name="Watanabe A."/>
            <person name="Yamada M."/>
            <person name="Yasuda M."/>
            <person name="Tabata S."/>
        </authorList>
    </citation>
    <scope>NUCLEOTIDE SEQUENCE [LARGE SCALE GENOMIC DNA]</scope>
    <source>
        <strain>cv. Columbia</strain>
    </source>
</reference>
<reference key="3">
    <citation type="journal article" date="2017" name="Plant J.">
        <title>Araport11: a complete reannotation of the Arabidopsis thaliana reference genome.</title>
        <authorList>
            <person name="Cheng C.Y."/>
            <person name="Krishnakumar V."/>
            <person name="Chan A.P."/>
            <person name="Thibaud-Nissen F."/>
            <person name="Schobel S."/>
            <person name="Town C.D."/>
        </authorList>
    </citation>
    <scope>GENOME REANNOTATION</scope>
    <source>
        <strain>cv. Columbia</strain>
    </source>
</reference>
<reference key="4">
    <citation type="journal article" date="2003" name="Science">
        <title>Empirical analysis of transcriptional activity in the Arabidopsis genome.</title>
        <authorList>
            <person name="Yamada K."/>
            <person name="Lim J."/>
            <person name="Dale J.M."/>
            <person name="Chen H."/>
            <person name="Shinn P."/>
            <person name="Palm C.J."/>
            <person name="Southwick A.M."/>
            <person name="Wu H.C."/>
            <person name="Kim C.J."/>
            <person name="Nguyen M."/>
            <person name="Pham P.K."/>
            <person name="Cheuk R.F."/>
            <person name="Karlin-Newmann G."/>
            <person name="Liu S.X."/>
            <person name="Lam B."/>
            <person name="Sakano H."/>
            <person name="Wu T."/>
            <person name="Yu G."/>
            <person name="Miranda M."/>
            <person name="Quach H.L."/>
            <person name="Tripp M."/>
            <person name="Chang C.H."/>
            <person name="Lee J.M."/>
            <person name="Toriumi M.J."/>
            <person name="Chan M.M."/>
            <person name="Tang C.C."/>
            <person name="Onodera C.S."/>
            <person name="Deng J.M."/>
            <person name="Akiyama K."/>
            <person name="Ansari Y."/>
            <person name="Arakawa T."/>
            <person name="Banh J."/>
            <person name="Banno F."/>
            <person name="Bowser L."/>
            <person name="Brooks S.Y."/>
            <person name="Carninci P."/>
            <person name="Chao Q."/>
            <person name="Choy N."/>
            <person name="Enju A."/>
            <person name="Goldsmith A.D."/>
            <person name="Gurjal M."/>
            <person name="Hansen N.F."/>
            <person name="Hayashizaki Y."/>
            <person name="Johnson-Hopson C."/>
            <person name="Hsuan V.W."/>
            <person name="Iida K."/>
            <person name="Karnes M."/>
            <person name="Khan S."/>
            <person name="Koesema E."/>
            <person name="Ishida J."/>
            <person name="Jiang P.X."/>
            <person name="Jones T."/>
            <person name="Kawai J."/>
            <person name="Kamiya A."/>
            <person name="Meyers C."/>
            <person name="Nakajima M."/>
            <person name="Narusaka M."/>
            <person name="Seki M."/>
            <person name="Sakurai T."/>
            <person name="Satou M."/>
            <person name="Tamse R."/>
            <person name="Vaysberg M."/>
            <person name="Wallender E.K."/>
            <person name="Wong C."/>
            <person name="Yamamura Y."/>
            <person name="Yuan S."/>
            <person name="Shinozaki K."/>
            <person name="Davis R.W."/>
            <person name="Theologis A."/>
            <person name="Ecker J.R."/>
        </authorList>
    </citation>
    <scope>NUCLEOTIDE SEQUENCE [LARGE SCALE MRNA] (ISOFORM 2)</scope>
    <source>
        <strain>cv. Columbia</strain>
    </source>
</reference>
<reference key="5">
    <citation type="submission" date="2002-03" db="EMBL/GenBank/DDBJ databases">
        <title>Full-length cDNA from Arabidopsis thaliana.</title>
        <authorList>
            <person name="Brover V.V."/>
            <person name="Troukhan M.E."/>
            <person name="Alexandrov N.A."/>
            <person name="Lu Y.-P."/>
            <person name="Flavell R.B."/>
            <person name="Feldmann K.A."/>
        </authorList>
    </citation>
    <scope>NUCLEOTIDE SEQUENCE [LARGE SCALE MRNA] OF 341-426 (ISOFORMS 1/2)</scope>
</reference>
<reference key="6">
    <citation type="journal article" date="2003" name="Plant Cell">
        <title>The Arabidopsis basic/helix-loop-helix transcription factor family.</title>
        <authorList>
            <person name="Toledo-Ortiz G."/>
            <person name="Huq E."/>
            <person name="Quail P.H."/>
        </authorList>
    </citation>
    <scope>GENE FAMILY</scope>
</reference>
<reference key="7">
    <citation type="journal article" date="2003" name="Plant Cell">
        <title>Update on the basic helix-loop-helix transcription factor gene family in Arabidopsis thaliana.</title>
        <authorList>
            <person name="Bailey P.C."/>
            <person name="Martin C."/>
            <person name="Toledo-Ortiz G."/>
            <person name="Quail P.H."/>
            <person name="Huq E."/>
            <person name="Heim M.A."/>
            <person name="Jakoby M."/>
            <person name="Werber M."/>
            <person name="Weisshaar B."/>
        </authorList>
    </citation>
    <scope>GENE FAMILY</scope>
    <scope>NOMENCLATURE</scope>
</reference>
<dbReference type="EMBL" id="AF488593">
    <property type="protein sequence ID" value="AAM10949.1"/>
    <property type="molecule type" value="mRNA"/>
</dbReference>
<dbReference type="EMBL" id="AL049660">
    <property type="protein sequence ID" value="CAB41175.1"/>
    <property type="molecule type" value="Genomic_DNA"/>
</dbReference>
<dbReference type="EMBL" id="AL132977">
    <property type="protein sequence ID" value="CAB67608.1"/>
    <property type="molecule type" value="Genomic_DNA"/>
</dbReference>
<dbReference type="EMBL" id="CP002686">
    <property type="protein sequence ID" value="AEE79702.1"/>
    <property type="molecule type" value="Genomic_DNA"/>
</dbReference>
<dbReference type="EMBL" id="CP002686">
    <property type="protein sequence ID" value="AEE79703.1"/>
    <property type="molecule type" value="Genomic_DNA"/>
</dbReference>
<dbReference type="EMBL" id="AY139773">
    <property type="protein sequence ID" value="AAM98091.1"/>
    <property type="molecule type" value="mRNA"/>
</dbReference>
<dbReference type="EMBL" id="BT003037">
    <property type="protein sequence ID" value="AAO23602.1"/>
    <property type="molecule type" value="mRNA"/>
</dbReference>
<dbReference type="EMBL" id="AY085849">
    <property type="protein sequence ID" value="AAM67309.1"/>
    <property type="molecule type" value="mRNA"/>
</dbReference>
<dbReference type="PIR" id="T46002">
    <property type="entry name" value="T46002"/>
</dbReference>
<dbReference type="RefSeq" id="NP_567057.2">
    <molecule id="Q3EAI1-1"/>
    <property type="nucleotide sequence ID" value="NM_115642.2"/>
</dbReference>
<dbReference type="RefSeq" id="NP_850745.1">
    <molecule id="Q3EAI1-2"/>
    <property type="nucleotide sequence ID" value="NM_180414.3"/>
</dbReference>
<dbReference type="BioGRID" id="10844">
    <property type="interactions" value="20"/>
</dbReference>
<dbReference type="FunCoup" id="Q3EAI1">
    <property type="interactions" value="182"/>
</dbReference>
<dbReference type="IntAct" id="Q3EAI1">
    <property type="interactions" value="21"/>
</dbReference>
<dbReference type="STRING" id="3702.Q3EAI1"/>
<dbReference type="GlyGen" id="Q3EAI1">
    <property type="glycosylation" value="1 site"/>
</dbReference>
<dbReference type="PaxDb" id="3702-AT3G57800.1"/>
<dbReference type="ProteomicsDB" id="240875">
    <molecule id="Q3EAI1-1"/>
</dbReference>
<dbReference type="EnsemblPlants" id="AT3G57800.1">
    <molecule id="Q3EAI1-1"/>
    <property type="protein sequence ID" value="AT3G57800.1"/>
    <property type="gene ID" value="AT3G57800"/>
</dbReference>
<dbReference type="EnsemblPlants" id="AT3G57800.2">
    <molecule id="Q3EAI1-2"/>
    <property type="protein sequence ID" value="AT3G57800.2"/>
    <property type="gene ID" value="AT3G57800"/>
</dbReference>
<dbReference type="GeneID" id="825530"/>
<dbReference type="Gramene" id="AT3G57800.1">
    <molecule id="Q3EAI1-1"/>
    <property type="protein sequence ID" value="AT3G57800.1"/>
    <property type="gene ID" value="AT3G57800"/>
</dbReference>
<dbReference type="Gramene" id="AT3G57800.2">
    <molecule id="Q3EAI1-2"/>
    <property type="protein sequence ID" value="AT3G57800.2"/>
    <property type="gene ID" value="AT3G57800"/>
</dbReference>
<dbReference type="KEGG" id="ath:AT3G57800"/>
<dbReference type="Araport" id="AT3G57800"/>
<dbReference type="TAIR" id="AT3G57800"/>
<dbReference type="eggNOG" id="ENOG502QS36">
    <property type="taxonomic scope" value="Eukaryota"/>
</dbReference>
<dbReference type="InParanoid" id="Q3EAI1"/>
<dbReference type="OMA" id="QYQQQWH"/>
<dbReference type="OrthoDB" id="690068at2759"/>
<dbReference type="PhylomeDB" id="Q3EAI1"/>
<dbReference type="PRO" id="PR:Q3EAI1"/>
<dbReference type="Proteomes" id="UP000006548">
    <property type="component" value="Chromosome 3"/>
</dbReference>
<dbReference type="ExpressionAtlas" id="Q3EAI1">
    <property type="expression patterns" value="baseline and differential"/>
</dbReference>
<dbReference type="GO" id="GO:0005634">
    <property type="term" value="C:nucleus"/>
    <property type="evidence" value="ECO:0007669"/>
    <property type="project" value="UniProtKB-SubCell"/>
</dbReference>
<dbReference type="GO" id="GO:0003677">
    <property type="term" value="F:DNA binding"/>
    <property type="evidence" value="ECO:0000314"/>
    <property type="project" value="TAIR"/>
</dbReference>
<dbReference type="GO" id="GO:0003700">
    <property type="term" value="F:DNA-binding transcription factor activity"/>
    <property type="evidence" value="ECO:0000250"/>
    <property type="project" value="TAIR"/>
</dbReference>
<dbReference type="GO" id="GO:0046983">
    <property type="term" value="F:protein dimerization activity"/>
    <property type="evidence" value="ECO:0007669"/>
    <property type="project" value="InterPro"/>
</dbReference>
<dbReference type="GO" id="GO:0006355">
    <property type="term" value="P:regulation of DNA-templated transcription"/>
    <property type="evidence" value="ECO:0000304"/>
    <property type="project" value="TAIR"/>
</dbReference>
<dbReference type="CDD" id="cd18919">
    <property type="entry name" value="bHLH_AtBPE_like"/>
    <property type="match status" value="1"/>
</dbReference>
<dbReference type="Gene3D" id="4.10.280.10">
    <property type="entry name" value="Helix-loop-helix DNA-binding domain"/>
    <property type="match status" value="1"/>
</dbReference>
<dbReference type="InterPro" id="IPR011598">
    <property type="entry name" value="bHLH_dom"/>
</dbReference>
<dbReference type="InterPro" id="IPR024097">
    <property type="entry name" value="bHLH_ZIP_TF"/>
</dbReference>
<dbReference type="InterPro" id="IPR036638">
    <property type="entry name" value="HLH_DNA-bd_sf"/>
</dbReference>
<dbReference type="PANTHER" id="PTHR12565">
    <property type="entry name" value="STEROL REGULATORY ELEMENT-BINDING PROTEIN"/>
    <property type="match status" value="1"/>
</dbReference>
<dbReference type="PANTHER" id="PTHR12565:SF112">
    <property type="entry name" value="TRANSCRIPTION FACTOR BHLH48-RELATED"/>
    <property type="match status" value="1"/>
</dbReference>
<dbReference type="Pfam" id="PF00010">
    <property type="entry name" value="HLH"/>
    <property type="match status" value="1"/>
</dbReference>
<dbReference type="SMART" id="SM00353">
    <property type="entry name" value="HLH"/>
    <property type="match status" value="1"/>
</dbReference>
<dbReference type="SUPFAM" id="SSF47459">
    <property type="entry name" value="HLH, helix-loop-helix DNA-binding domain"/>
    <property type="match status" value="1"/>
</dbReference>
<dbReference type="PROSITE" id="PS50888">
    <property type="entry name" value="BHLH"/>
    <property type="match status" value="1"/>
</dbReference>
<gene>
    <name type="primary">BHLH60</name>
    <name type="synonym">EN91</name>
    <name type="ordered locus">At3g57800</name>
    <name type="ORF">F15B8.10</name>
    <name type="ORF">T10K17.10</name>
</gene>
<name>BH060_ARATH</name>
<evidence type="ECO:0000255" key="1">
    <source>
        <dbReference type="PROSITE-ProRule" id="PRU00981"/>
    </source>
</evidence>
<evidence type="ECO:0000256" key="2">
    <source>
        <dbReference type="SAM" id="MobiDB-lite"/>
    </source>
</evidence>
<evidence type="ECO:0000269" key="3">
    <source>
    </source>
</evidence>
<evidence type="ECO:0000303" key="4">
    <source>
    </source>
</evidence>
<evidence type="ECO:0000303" key="5">
    <source>
    </source>
</evidence>
<evidence type="ECO:0000305" key="6"/>
<keyword id="KW-0025">Alternative splicing</keyword>
<keyword id="KW-0238">DNA-binding</keyword>
<keyword id="KW-0539">Nucleus</keyword>
<keyword id="KW-1185">Reference proteome</keyword>
<keyword id="KW-0804">Transcription</keyword>
<keyword id="KW-0805">Transcription regulation</keyword>
<protein>
    <recommendedName>
        <fullName>Transcription factor bHLH60</fullName>
    </recommendedName>
    <alternativeName>
        <fullName>Basic helix-loop-helix protein 60</fullName>
        <shortName>AtbHLH60</shortName>
        <shortName>bHLH 60</shortName>
    </alternativeName>
    <alternativeName>
        <fullName>Transcription factor EN 91</fullName>
    </alternativeName>
    <alternativeName>
        <fullName>bHLH transcription factor bHLH060</fullName>
    </alternativeName>
</protein>
<feature type="chain" id="PRO_0000358755" description="Transcription factor bHLH60">
    <location>
        <begin position="1"/>
        <end position="426"/>
    </location>
</feature>
<feature type="domain" description="bHLH" evidence="1">
    <location>
        <begin position="210"/>
        <end position="307"/>
    </location>
</feature>
<feature type="region of interest" description="Disordered" evidence="2">
    <location>
        <begin position="117"/>
        <end position="201"/>
    </location>
</feature>
<feature type="region of interest" description="Disordered" evidence="2">
    <location>
        <begin position="367"/>
        <end position="398"/>
    </location>
</feature>
<feature type="compositionally biased region" description="Polar residues" evidence="2">
    <location>
        <begin position="117"/>
        <end position="137"/>
    </location>
</feature>
<feature type="compositionally biased region" description="Polar residues" evidence="2">
    <location>
        <begin position="148"/>
        <end position="172"/>
    </location>
</feature>
<feature type="compositionally biased region" description="Basic and acidic residues" evidence="2">
    <location>
        <begin position="191"/>
        <end position="200"/>
    </location>
</feature>
<feature type="splice variant" id="VSP_036088" description="In isoform 2." evidence="4 5">
    <location>
        <begin position="243"/>
        <end position="289"/>
    </location>
</feature>
<feature type="sequence conflict" description="In Ref. 5; AAM67309." evidence="6" ref="5">
    <original>R</original>
    <variation>Q</variation>
    <location>
        <position position="368"/>
    </location>
</feature>
<feature type="sequence conflict" description="In Ref. 5; AAM67309." evidence="6" ref="5">
    <original>E</original>
    <variation>K</variation>
    <location>
        <position position="392"/>
    </location>
</feature>
<feature type="sequence conflict" description="In Ref. 1; AAM10949." evidence="6" ref="1">
    <original>A</original>
    <variation>T</variation>
    <location>
        <position position="405"/>
    </location>
</feature>
<accession>Q3EAI1</accession>
<accession>Q8LDR2</accession>
<accession>Q8S3E2</accession>
<accession>Q9M2R7</accession>
<accession>Q9SVZ4</accession>